<proteinExistence type="evidence at transcript level"/>
<keyword id="KW-0010">Activator</keyword>
<keyword id="KW-0238">DNA-binding</keyword>
<keyword id="KW-0371">Homeobox</keyword>
<keyword id="KW-0539">Nucleus</keyword>
<keyword id="KW-0804">Transcription</keyword>
<keyword id="KW-0805">Transcription regulation</keyword>
<reference key="1">
    <citation type="journal article" date="1993" name="J. Biol. Chem.">
        <title>Molecular cloning of fish Pit-1 cDNA and its functional binding to promoter of gene expressed in the pituitary.</title>
        <authorList>
            <person name="Yamada S."/>
            <person name="Hata J."/>
            <person name="Yamashita S."/>
        </authorList>
    </citation>
    <scope>NUCLEOTIDE SEQUENCE [MRNA]</scope>
    <source>
        <tissue>Pituitary</tissue>
    </source>
</reference>
<organism>
    <name type="scientific">Oncorhynchus mykiss</name>
    <name type="common">Rainbow trout</name>
    <name type="synonym">Salmo gairdneri</name>
    <dbReference type="NCBI Taxonomy" id="8022"/>
    <lineage>
        <taxon>Eukaryota</taxon>
        <taxon>Metazoa</taxon>
        <taxon>Chordata</taxon>
        <taxon>Craniata</taxon>
        <taxon>Vertebrata</taxon>
        <taxon>Euteleostomi</taxon>
        <taxon>Actinopterygii</taxon>
        <taxon>Neopterygii</taxon>
        <taxon>Teleostei</taxon>
        <taxon>Protacanthopterygii</taxon>
        <taxon>Salmoniformes</taxon>
        <taxon>Salmonidae</taxon>
        <taxon>Salmoninae</taxon>
        <taxon>Oncorhynchus</taxon>
    </lineage>
</organism>
<evidence type="ECO:0000250" key="1">
    <source>
        <dbReference type="UniProtKB" id="P28069"/>
    </source>
</evidence>
<evidence type="ECO:0000255" key="2">
    <source>
        <dbReference type="PROSITE-ProRule" id="PRU00108"/>
    </source>
</evidence>
<evidence type="ECO:0000255" key="3">
    <source>
        <dbReference type="PROSITE-ProRule" id="PRU00530"/>
    </source>
</evidence>
<evidence type="ECO:0000256" key="4">
    <source>
        <dbReference type="SAM" id="MobiDB-lite"/>
    </source>
</evidence>
<evidence type="ECO:0000305" key="5"/>
<dbReference type="EMBL" id="D16513">
    <property type="protein sequence ID" value="BAA03964.1"/>
    <property type="molecule type" value="mRNA"/>
</dbReference>
<dbReference type="PIR" id="A49511">
    <property type="entry name" value="A49511"/>
</dbReference>
<dbReference type="RefSeq" id="NP_001118118.1">
    <property type="nucleotide sequence ID" value="NM_001124646.1"/>
</dbReference>
<dbReference type="SMR" id="Q08478"/>
<dbReference type="Ensembl" id="ENSOMYT00000078026.2">
    <property type="protein sequence ID" value="ENSOMYP00000071664.1"/>
    <property type="gene ID" value="ENSOMYG00000033132.2"/>
</dbReference>
<dbReference type="GeneID" id="100136675"/>
<dbReference type="KEGG" id="omy:100136675"/>
<dbReference type="CTD" id="5449"/>
<dbReference type="GeneTree" id="ENSGT00940000158913"/>
<dbReference type="OrthoDB" id="6358449at2759"/>
<dbReference type="Proteomes" id="UP000694395">
    <property type="component" value="Chromosome 22"/>
</dbReference>
<dbReference type="GO" id="GO:0005634">
    <property type="term" value="C:nucleus"/>
    <property type="evidence" value="ECO:0000314"/>
    <property type="project" value="AgBase"/>
</dbReference>
<dbReference type="GO" id="GO:0001046">
    <property type="term" value="F:core promoter sequence-specific DNA binding"/>
    <property type="evidence" value="ECO:0000314"/>
    <property type="project" value="AgBase"/>
</dbReference>
<dbReference type="GO" id="GO:0000981">
    <property type="term" value="F:DNA-binding transcription factor activity, RNA polymerase II-specific"/>
    <property type="evidence" value="ECO:0000250"/>
    <property type="project" value="UniProtKB"/>
</dbReference>
<dbReference type="GO" id="GO:0000978">
    <property type="term" value="F:RNA polymerase II cis-regulatory region sequence-specific DNA binding"/>
    <property type="evidence" value="ECO:0007669"/>
    <property type="project" value="TreeGrafter"/>
</dbReference>
<dbReference type="GO" id="GO:0010628">
    <property type="term" value="P:positive regulation of gene expression"/>
    <property type="evidence" value="ECO:0000314"/>
    <property type="project" value="AgBase"/>
</dbReference>
<dbReference type="GO" id="GO:0045944">
    <property type="term" value="P:positive regulation of transcription by RNA polymerase II"/>
    <property type="evidence" value="ECO:0000250"/>
    <property type="project" value="UniProtKB"/>
</dbReference>
<dbReference type="CDD" id="cd00086">
    <property type="entry name" value="homeodomain"/>
    <property type="match status" value="1"/>
</dbReference>
<dbReference type="FunFam" id="1.10.10.60:FF:000150">
    <property type="entry name" value="POU domain protein"/>
    <property type="match status" value="1"/>
</dbReference>
<dbReference type="FunFam" id="1.10.260.40:FF:000007">
    <property type="entry name" value="POU domain protein"/>
    <property type="match status" value="1"/>
</dbReference>
<dbReference type="Gene3D" id="1.10.10.60">
    <property type="entry name" value="Homeodomain-like"/>
    <property type="match status" value="1"/>
</dbReference>
<dbReference type="Gene3D" id="1.10.260.40">
    <property type="entry name" value="lambda repressor-like DNA-binding domains"/>
    <property type="match status" value="1"/>
</dbReference>
<dbReference type="InterPro" id="IPR001356">
    <property type="entry name" value="HD"/>
</dbReference>
<dbReference type="InterPro" id="IPR017970">
    <property type="entry name" value="Homeobox_CS"/>
</dbReference>
<dbReference type="InterPro" id="IPR009057">
    <property type="entry name" value="Homeodomain-like_sf"/>
</dbReference>
<dbReference type="InterPro" id="IPR010982">
    <property type="entry name" value="Lambda_DNA-bd_dom_sf"/>
</dbReference>
<dbReference type="InterPro" id="IPR013847">
    <property type="entry name" value="POU"/>
</dbReference>
<dbReference type="InterPro" id="IPR000327">
    <property type="entry name" value="POU_dom"/>
</dbReference>
<dbReference type="InterPro" id="IPR050255">
    <property type="entry name" value="POU_domain_TF"/>
</dbReference>
<dbReference type="PANTHER" id="PTHR11636:SF84">
    <property type="entry name" value="NETRIN-1-RELATED"/>
    <property type="match status" value="1"/>
</dbReference>
<dbReference type="PANTHER" id="PTHR11636">
    <property type="entry name" value="POU DOMAIN"/>
    <property type="match status" value="1"/>
</dbReference>
<dbReference type="Pfam" id="PF00046">
    <property type="entry name" value="Homeodomain"/>
    <property type="match status" value="1"/>
</dbReference>
<dbReference type="Pfam" id="PF00157">
    <property type="entry name" value="Pou"/>
    <property type="match status" value="1"/>
</dbReference>
<dbReference type="PRINTS" id="PR00028">
    <property type="entry name" value="POUDOMAIN"/>
</dbReference>
<dbReference type="SMART" id="SM00389">
    <property type="entry name" value="HOX"/>
    <property type="match status" value="1"/>
</dbReference>
<dbReference type="SMART" id="SM00352">
    <property type="entry name" value="POU"/>
    <property type="match status" value="1"/>
</dbReference>
<dbReference type="SUPFAM" id="SSF46689">
    <property type="entry name" value="Homeodomain-like"/>
    <property type="match status" value="1"/>
</dbReference>
<dbReference type="SUPFAM" id="SSF47413">
    <property type="entry name" value="lambda repressor-like DNA-binding domains"/>
    <property type="match status" value="1"/>
</dbReference>
<dbReference type="PROSITE" id="PS00027">
    <property type="entry name" value="HOMEOBOX_1"/>
    <property type="match status" value="1"/>
</dbReference>
<dbReference type="PROSITE" id="PS50071">
    <property type="entry name" value="HOMEOBOX_2"/>
    <property type="match status" value="1"/>
</dbReference>
<dbReference type="PROSITE" id="PS00035">
    <property type="entry name" value="POU_1"/>
    <property type="match status" value="1"/>
</dbReference>
<dbReference type="PROSITE" id="PS00465">
    <property type="entry name" value="POU_2"/>
    <property type="match status" value="1"/>
</dbReference>
<dbReference type="PROSITE" id="PS51179">
    <property type="entry name" value="POU_3"/>
    <property type="match status" value="1"/>
</dbReference>
<name>PIT1_ONCMY</name>
<gene>
    <name type="primary">pou1f1</name>
    <name type="synonym">pit1</name>
</gene>
<protein>
    <recommendedName>
        <fullName>Pituitary-specific positive transcription factor 1</fullName>
        <shortName>PIT-1</shortName>
    </recommendedName>
    <alternativeName>
        <fullName>Growth hormone factor 1</fullName>
        <shortName>GHF-1</shortName>
    </alternativeName>
</protein>
<feature type="chain" id="PRO_0000100706" description="Pituitary-specific positive transcription factor 1">
    <location>
        <begin position="1"/>
        <end position="358"/>
    </location>
</feature>
<feature type="domain" description="POU-specific" evidence="3">
    <location>
        <begin position="192"/>
        <end position="266"/>
    </location>
</feature>
<feature type="DNA-binding region" description="Homeobox" evidence="2">
    <location>
        <begin position="282"/>
        <end position="341"/>
    </location>
</feature>
<feature type="region of interest" description="Disordered" evidence="4">
    <location>
        <begin position="164"/>
        <end position="195"/>
    </location>
</feature>
<feature type="short sequence motif" description="9aaTAD" evidence="1">
    <location>
        <begin position="5"/>
        <end position="12"/>
    </location>
</feature>
<feature type="compositionally biased region" description="Basic and acidic residues" evidence="4">
    <location>
        <begin position="177"/>
        <end position="187"/>
    </location>
</feature>
<sequence length="358" mass="39376">MSCQAFSADSFTTLAGDSLPLLMHHASAADCLPSSASTHTHNMVSAVPSGLSLLQSSKRSHMHLSTSTLGNALSNGPPGLHYPVTPCHYSNQQTTYGMMAAQEMLSASISQTRILQTCSVPHPNMVNGANTLQGSLAPCLYKFPEHGLGGGSCSLSHSFPPLPPAVLSEEPPLGGTKDLRLRSRPPDDPPDMDSPQIRELEKFANDFKLRRIKLGYTQTNVGEALAAVHGSEFSQTTICRFENLQLSFKNACTLKAILAKWLDEAEQAGALFNEKMGMNERKRKRRTTISLGAKEALERSFGEKIKPSSQEIVRMAEGLHLEKEVVRVWFCNRRQREKRVKTSLHHSSYLTKDSPTYR</sequence>
<comment type="function">
    <text evidence="1">Transcription factor that activates growth hormone and prolactin genes. Specifically binds to the consensus sequence 5'-TAAAT-3'.</text>
</comment>
<comment type="subcellular location">
    <subcellularLocation>
        <location evidence="1">Nucleus</location>
    </subcellularLocation>
</comment>
<comment type="domain">
    <text evidence="1">The 9aaTAD motif is a transactivation domain present in a large number of yeast and animal transcription factors.</text>
</comment>
<comment type="similarity">
    <text evidence="5">Belongs to the POU transcription factor family. Class-1 subfamily.</text>
</comment>
<accession>Q08478</accession>